<name>UTY_MOUSE</name>
<gene>
    <name type="primary">Uty</name>
    <name type="synonym">Kdm6c</name>
</gene>
<proteinExistence type="evidence at protein level"/>
<feature type="chain" id="PRO_0000106413" description="Histone demethylase UTY">
    <location>
        <begin position="1"/>
        <end position="1212"/>
    </location>
</feature>
<feature type="repeat" description="TPR 1">
    <location>
        <begin position="88"/>
        <end position="121"/>
    </location>
</feature>
<feature type="repeat" description="TPR 2">
    <location>
        <begin position="125"/>
        <end position="158"/>
    </location>
</feature>
<feature type="repeat" description="TPR 3">
    <location>
        <begin position="165"/>
        <end position="193"/>
    </location>
</feature>
<feature type="repeat" description="TPR 4">
    <location>
        <begin position="200"/>
        <end position="233"/>
    </location>
</feature>
<feature type="repeat" description="TPR 5">
    <location>
        <begin position="245"/>
        <end position="278"/>
    </location>
</feature>
<feature type="repeat" description="TPR 6">
    <location>
        <begin position="279"/>
        <end position="312"/>
    </location>
</feature>
<feature type="repeat" description="TPR 7">
    <location>
        <begin position="313"/>
        <end position="346"/>
    </location>
</feature>
<feature type="repeat" description="TPR 8">
    <location>
        <begin position="347"/>
        <end position="380"/>
    </location>
</feature>
<feature type="domain" description="JmjC" evidence="3">
    <location>
        <begin position="907"/>
        <end position="1070"/>
    </location>
</feature>
<feature type="region of interest" description="Disordered" evidence="4">
    <location>
        <begin position="530"/>
        <end position="555"/>
    </location>
</feature>
<feature type="region of interest" description="Disordered" evidence="4">
    <location>
        <begin position="865"/>
        <end position="886"/>
    </location>
</feature>
<feature type="compositionally biased region" description="Basic and acidic residues" evidence="4">
    <location>
        <begin position="530"/>
        <end position="539"/>
    </location>
</feature>
<feature type="binding site" evidence="1">
    <location>
        <position position="958"/>
    </location>
    <ligand>
        <name>Fe cation</name>
        <dbReference type="ChEBI" id="CHEBI:24875"/>
    </ligand>
</feature>
<feature type="binding site" evidence="1">
    <location>
        <position position="960"/>
    </location>
    <ligand>
        <name>Fe cation</name>
        <dbReference type="ChEBI" id="CHEBI:24875"/>
    </ligand>
</feature>
<feature type="binding site" evidence="2">
    <location>
        <position position="1038"/>
    </location>
    <ligand>
        <name>Fe cation</name>
        <dbReference type="ChEBI" id="CHEBI:24875"/>
    </ligand>
</feature>
<feature type="binding site" evidence="2">
    <location>
        <position position="1143"/>
    </location>
    <ligand>
        <name>Zn(2+)</name>
        <dbReference type="ChEBI" id="CHEBI:29105"/>
    </ligand>
</feature>
<feature type="binding site" evidence="2">
    <location>
        <position position="1146"/>
    </location>
    <ligand>
        <name>Zn(2+)</name>
        <dbReference type="ChEBI" id="CHEBI:29105"/>
    </ligand>
</feature>
<feature type="binding site" evidence="2">
    <location>
        <position position="1170"/>
    </location>
    <ligand>
        <name>Zn(2+)</name>
        <dbReference type="ChEBI" id="CHEBI:29105"/>
    </ligand>
</feature>
<feature type="binding site" evidence="2">
    <location>
        <position position="1173"/>
    </location>
    <ligand>
        <name>Zn(2+)</name>
        <dbReference type="ChEBI" id="CHEBI:29105"/>
    </ligand>
</feature>
<feature type="modified residue" description="Phosphothreonine" evidence="2">
    <location>
        <position position="752"/>
    </location>
</feature>
<feature type="sequence conflict" description="In Ref. 2; CAA70422." evidence="5" ref="2">
    <original>E</original>
    <variation>Q</variation>
    <location>
        <position position="1069"/>
    </location>
</feature>
<feature type="sequence conflict" description="In Ref. 2; CAA70422." evidence="5" ref="2">
    <original>EVFNLLFVTNESNSQKTYIVHCQNCARKTSGNLENFVVLEQYKMEDLIQVYDQFTLAPSLSSAS</original>
    <variation>STRDLLPQLHLRQCHLQGPTDKAAILEFHLTEGSGDMH</variation>
    <location>
        <begin position="1149"/>
        <end position="1212"/>
    </location>
</feature>
<protein>
    <recommendedName>
        <fullName>Histone demethylase UTY</fullName>
        <ecNumber evidence="2">1.14.11.68</ecNumber>
    </recommendedName>
    <alternativeName>
        <fullName>Male-specific histocompatibility antigen H-YDB</fullName>
    </alternativeName>
    <alternativeName>
        <fullName>Ubiquitously transcribed TPR protein on the Y chromosome</fullName>
    </alternativeName>
    <alternativeName>
        <fullName>Ubiquitously transcribed Y chromosome tetratricopeptide repeat protein</fullName>
    </alternativeName>
    <alternativeName>
        <fullName evidence="5">[histone H3]-trimethyl-L-lysine(27) demethylase UTY</fullName>
    </alternativeName>
</protein>
<reference key="1">
    <citation type="journal article" date="1998" name="Hum. Mol. Genet.">
        <title>The mouse Y chromosome interval necessary for spermatogonial proliferation is gene dense with syntenic homology to the human AZFa region.</title>
        <authorList>
            <person name="Mazeyrat S."/>
            <person name="Saut N."/>
            <person name="Sargent C.A."/>
            <person name="Grimmond S."/>
            <person name="Longepied G."/>
            <person name="Ehrmann I.E."/>
            <person name="Ellis P.S."/>
            <person name="Greenfield A."/>
            <person name="Affara N.A."/>
            <person name="Mitchell M.J."/>
        </authorList>
    </citation>
    <scope>NUCLEOTIDE SEQUENCE [MRNA]</scope>
    <source>
        <strain>RIII</strain>
        <tissue>Testis</tissue>
    </source>
</reference>
<reference key="2">
    <citation type="journal article" date="1996" name="Nat. Genet.">
        <title>An H-YDb epitope is encoded by a novel mouse Y chromosome gene.</title>
        <authorList>
            <person name="Greenfield A."/>
            <person name="Scott D."/>
            <person name="Pennisi D."/>
            <person name="Ehrmann I."/>
            <person name="Ellis P.S."/>
            <person name="Cooper L."/>
            <person name="Simpson E."/>
            <person name="Koopman P."/>
        </authorList>
    </citation>
    <scope>NUCLEOTIDE SEQUENCE [MRNA]</scope>
    <source>
        <strain>SWR/J</strain>
    </source>
</reference>
<reference key="3">
    <citation type="journal article" date="1999" name="Biochem. J.">
        <title>Groucho/transducin-like enhancer of split (TLE) family members interact with the yeast transcriptional co-repressor SSN6 and mammalian SSN6-related proteins: implications for evolutionary conservation of transcription repression mechanisms.</title>
        <authorList>
            <person name="Grbavec D."/>
            <person name="Lo R."/>
            <person name="Liu Y."/>
            <person name="Greenfield A."/>
            <person name="Stifani S."/>
        </authorList>
    </citation>
    <scope>INTERACTION WITH TLE1 AND TLE2</scope>
</reference>
<dbReference type="EC" id="1.14.11.68" evidence="2"/>
<dbReference type="EMBL" id="AF057367">
    <property type="protein sequence ID" value="AAC67385.1"/>
    <property type="molecule type" value="mRNA"/>
</dbReference>
<dbReference type="EMBL" id="Y09222">
    <property type="protein sequence ID" value="CAA70422.1"/>
    <property type="molecule type" value="mRNA"/>
</dbReference>
<dbReference type="CCDS" id="CCDS41216.1"/>
<dbReference type="PIR" id="T42387">
    <property type="entry name" value="T42387"/>
</dbReference>
<dbReference type="PIR" id="T42729">
    <property type="entry name" value="T42729"/>
</dbReference>
<dbReference type="SMR" id="P79457"/>
<dbReference type="FunCoup" id="P79457">
    <property type="interactions" value="18"/>
</dbReference>
<dbReference type="STRING" id="10090.ENSMUSP00000070012"/>
<dbReference type="GlyGen" id="P79457">
    <property type="glycosylation" value="1 site"/>
</dbReference>
<dbReference type="iPTMnet" id="P79457"/>
<dbReference type="PhosphoSitePlus" id="P79457"/>
<dbReference type="jPOST" id="P79457"/>
<dbReference type="PaxDb" id="10090-ENSMUSP00000070012"/>
<dbReference type="ProteomicsDB" id="297903"/>
<dbReference type="AGR" id="MGI:894810"/>
<dbReference type="MGI" id="MGI:894810">
    <property type="gene designation" value="Uty"/>
</dbReference>
<dbReference type="eggNOG" id="KOG1124">
    <property type="taxonomic scope" value="Eukaryota"/>
</dbReference>
<dbReference type="eggNOG" id="KOG1246">
    <property type="taxonomic scope" value="Eukaryota"/>
</dbReference>
<dbReference type="InParanoid" id="P79457"/>
<dbReference type="PhylomeDB" id="P79457"/>
<dbReference type="Reactome" id="R-MMU-3214842">
    <property type="pathway name" value="HDMs demethylate histones"/>
</dbReference>
<dbReference type="ChiTaRS" id="Uty">
    <property type="organism name" value="mouse"/>
</dbReference>
<dbReference type="PRO" id="PR:P79457"/>
<dbReference type="Proteomes" id="UP000000589">
    <property type="component" value="Unplaced"/>
</dbReference>
<dbReference type="RNAct" id="P79457">
    <property type="molecule type" value="protein"/>
</dbReference>
<dbReference type="GO" id="GO:0005634">
    <property type="term" value="C:nucleus"/>
    <property type="evidence" value="ECO:0007669"/>
    <property type="project" value="UniProtKB-SubCell"/>
</dbReference>
<dbReference type="GO" id="GO:0032991">
    <property type="term" value="C:protein-containing complex"/>
    <property type="evidence" value="ECO:0000314"/>
    <property type="project" value="MGI"/>
</dbReference>
<dbReference type="GO" id="GO:0071558">
    <property type="term" value="F:histone H3K27me2/H3K27me3 demethylase activity"/>
    <property type="evidence" value="ECO:0007669"/>
    <property type="project" value="UniProtKB-EC"/>
</dbReference>
<dbReference type="GO" id="GO:0051864">
    <property type="term" value="F:histone H3K36 demethylase activity"/>
    <property type="evidence" value="ECO:0000315"/>
    <property type="project" value="MGI"/>
</dbReference>
<dbReference type="GO" id="GO:0046872">
    <property type="term" value="F:metal ion binding"/>
    <property type="evidence" value="ECO:0007669"/>
    <property type="project" value="UniProtKB-KW"/>
</dbReference>
<dbReference type="GO" id="GO:0000978">
    <property type="term" value="F:RNA polymerase II cis-regulatory region sequence-specific DNA binding"/>
    <property type="evidence" value="ECO:0000314"/>
    <property type="project" value="MGI"/>
</dbReference>
<dbReference type="GO" id="GO:0086003">
    <property type="term" value="P:cardiac muscle cell contraction"/>
    <property type="evidence" value="ECO:0000315"/>
    <property type="project" value="MGI"/>
</dbReference>
<dbReference type="GO" id="GO:0048568">
    <property type="term" value="P:embryonic organ development"/>
    <property type="evidence" value="ECO:0000315"/>
    <property type="project" value="MGI"/>
</dbReference>
<dbReference type="GO" id="GO:0045184">
    <property type="term" value="P:establishment of protein localization"/>
    <property type="evidence" value="ECO:0000314"/>
    <property type="project" value="MGI"/>
</dbReference>
<dbReference type="GO" id="GO:0007507">
    <property type="term" value="P:heart development"/>
    <property type="evidence" value="ECO:0000315"/>
    <property type="project" value="MGI"/>
</dbReference>
<dbReference type="GO" id="GO:0003007">
    <property type="term" value="P:heart morphogenesis"/>
    <property type="evidence" value="ECO:0000315"/>
    <property type="project" value="MGI"/>
</dbReference>
<dbReference type="GO" id="GO:0031507">
    <property type="term" value="P:heterochromatin formation"/>
    <property type="evidence" value="ECO:0000315"/>
    <property type="project" value="MGI"/>
</dbReference>
<dbReference type="GO" id="GO:0001701">
    <property type="term" value="P:in utero embryonic development"/>
    <property type="evidence" value="ECO:0000315"/>
    <property type="project" value="MGI"/>
</dbReference>
<dbReference type="GO" id="GO:0010468">
    <property type="term" value="P:regulation of gene expression"/>
    <property type="evidence" value="ECO:0000315"/>
    <property type="project" value="MGI"/>
</dbReference>
<dbReference type="FunFam" id="1.25.40.10:FF:000022">
    <property type="entry name" value="lysine-specific demethylase 6A isoform X1"/>
    <property type="match status" value="1"/>
</dbReference>
<dbReference type="FunFam" id="1.20.58.1370:FF:000001">
    <property type="entry name" value="lysine-specific demethylase 6A isoform X2"/>
    <property type="match status" value="1"/>
</dbReference>
<dbReference type="FunFam" id="2.10.110.20:FF:000001">
    <property type="entry name" value="lysine-specific demethylase 6A isoform X2"/>
    <property type="match status" value="1"/>
</dbReference>
<dbReference type="FunFam" id="2.60.120.650:FF:000002">
    <property type="entry name" value="lysine-specific demethylase 6A isoform X2"/>
    <property type="match status" value="1"/>
</dbReference>
<dbReference type="FunFam" id="1.25.40.10:FF:000011">
    <property type="entry name" value="lysine-specific demethylase 6A isoform X3"/>
    <property type="match status" value="1"/>
</dbReference>
<dbReference type="FunFam" id="1.20.58.1370:FF:000002">
    <property type="entry name" value="lysine-specific demethylase 6A isoform X6"/>
    <property type="match status" value="1"/>
</dbReference>
<dbReference type="Gene3D" id="1.20.58.1370">
    <property type="match status" value="2"/>
</dbReference>
<dbReference type="Gene3D" id="2.10.110.20">
    <property type="match status" value="1"/>
</dbReference>
<dbReference type="Gene3D" id="2.60.120.650">
    <property type="entry name" value="Cupin"/>
    <property type="match status" value="1"/>
</dbReference>
<dbReference type="Gene3D" id="1.25.40.10">
    <property type="entry name" value="Tetratricopeptide repeat domain"/>
    <property type="match status" value="2"/>
</dbReference>
<dbReference type="InterPro" id="IPR051630">
    <property type="entry name" value="Corepressor-Demethylase"/>
</dbReference>
<dbReference type="InterPro" id="IPR003347">
    <property type="entry name" value="JmjC_dom"/>
</dbReference>
<dbReference type="InterPro" id="IPR046941">
    <property type="entry name" value="KDM6_GATAL_sf"/>
</dbReference>
<dbReference type="InterPro" id="IPR048562">
    <property type="entry name" value="KDM6A_B-like_C-hel"/>
</dbReference>
<dbReference type="InterPro" id="IPR048560">
    <property type="entry name" value="KDM6A_B-like_GATAL"/>
</dbReference>
<dbReference type="InterPro" id="IPR011990">
    <property type="entry name" value="TPR-like_helical_dom_sf"/>
</dbReference>
<dbReference type="InterPro" id="IPR019734">
    <property type="entry name" value="TPR_rpt"/>
</dbReference>
<dbReference type="PANTHER" id="PTHR14017:SF25">
    <property type="entry name" value="HISTONE DEMETHYLASE UTY"/>
    <property type="match status" value="1"/>
</dbReference>
<dbReference type="PANTHER" id="PTHR14017">
    <property type="entry name" value="LYSINE-SPECIFIC DEMETHYLASE"/>
    <property type="match status" value="1"/>
</dbReference>
<dbReference type="Pfam" id="PF02373">
    <property type="entry name" value="JmjC"/>
    <property type="match status" value="1"/>
</dbReference>
<dbReference type="Pfam" id="PF21322">
    <property type="entry name" value="KDM6_C-hel"/>
    <property type="match status" value="1"/>
</dbReference>
<dbReference type="Pfam" id="PF21326">
    <property type="entry name" value="KDM6_GATAL"/>
    <property type="match status" value="1"/>
</dbReference>
<dbReference type="Pfam" id="PF13432">
    <property type="entry name" value="TPR_16"/>
    <property type="match status" value="1"/>
</dbReference>
<dbReference type="Pfam" id="PF13181">
    <property type="entry name" value="TPR_8"/>
    <property type="match status" value="1"/>
</dbReference>
<dbReference type="SMART" id="SM00558">
    <property type="entry name" value="JmjC"/>
    <property type="match status" value="1"/>
</dbReference>
<dbReference type="SMART" id="SM00028">
    <property type="entry name" value="TPR"/>
    <property type="match status" value="7"/>
</dbReference>
<dbReference type="SUPFAM" id="SSF51197">
    <property type="entry name" value="Clavaminate synthase-like"/>
    <property type="match status" value="1"/>
</dbReference>
<dbReference type="SUPFAM" id="SSF81901">
    <property type="entry name" value="HCP-like"/>
    <property type="match status" value="1"/>
</dbReference>
<dbReference type="SUPFAM" id="SSF48452">
    <property type="entry name" value="TPR-like"/>
    <property type="match status" value="1"/>
</dbReference>
<dbReference type="PROSITE" id="PS51184">
    <property type="entry name" value="JMJC"/>
    <property type="match status" value="1"/>
</dbReference>
<dbReference type="PROSITE" id="PS50005">
    <property type="entry name" value="TPR"/>
    <property type="match status" value="7"/>
</dbReference>
<dbReference type="PROSITE" id="PS50293">
    <property type="entry name" value="TPR_REGION"/>
    <property type="match status" value="1"/>
</dbReference>
<accession>P79457</accession>
<accession>O97979</accession>
<keyword id="KW-0156">Chromatin regulator</keyword>
<keyword id="KW-0223">Dioxygenase</keyword>
<keyword id="KW-0408">Iron</keyword>
<keyword id="KW-0479">Metal-binding</keyword>
<keyword id="KW-0539">Nucleus</keyword>
<keyword id="KW-0560">Oxidoreductase</keyword>
<keyword id="KW-0597">Phosphoprotein</keyword>
<keyword id="KW-1185">Reference proteome</keyword>
<keyword id="KW-0677">Repeat</keyword>
<keyword id="KW-0802">TPR repeat</keyword>
<keyword id="KW-0862">Zinc</keyword>
<evidence type="ECO:0000250" key="1"/>
<evidence type="ECO:0000250" key="2">
    <source>
        <dbReference type="UniProtKB" id="O14607"/>
    </source>
</evidence>
<evidence type="ECO:0000255" key="3">
    <source>
        <dbReference type="PROSITE-ProRule" id="PRU00538"/>
    </source>
</evidence>
<evidence type="ECO:0000256" key="4">
    <source>
        <dbReference type="SAM" id="MobiDB-lite"/>
    </source>
</evidence>
<evidence type="ECO:0000305" key="5"/>
<organism>
    <name type="scientific">Mus musculus</name>
    <name type="common">Mouse</name>
    <dbReference type="NCBI Taxonomy" id="10090"/>
    <lineage>
        <taxon>Eukaryota</taxon>
        <taxon>Metazoa</taxon>
        <taxon>Chordata</taxon>
        <taxon>Craniata</taxon>
        <taxon>Vertebrata</taxon>
        <taxon>Euteleostomi</taxon>
        <taxon>Mammalia</taxon>
        <taxon>Eutheria</taxon>
        <taxon>Euarchontoglires</taxon>
        <taxon>Glires</taxon>
        <taxon>Rodentia</taxon>
        <taxon>Myomorpha</taxon>
        <taxon>Muroidea</taxon>
        <taxon>Muridae</taxon>
        <taxon>Murinae</taxon>
        <taxon>Mus</taxon>
        <taxon>Mus</taxon>
    </lineage>
</organism>
<sequence>MKSYGLSLTTAALGNEEKKMAAEKARGEGEEGSFSLTVEEKKALCGLDSSFFGFLTRCKDGAKMKTLLNKAIHFYESLIVKAEGKVESDFFCQLGHFNLLLEDYSKALSSYQRYYSLQTDYWKNAAFLYGLGLVYFYYNAFQWAIRAFQEVLYVDPNFCRAKEIHLRLGFMFKMNTDYESSLKHFQLALIDCNVCTLSSVEIQFHIAHLYETQRKYHSAKAAYEQLLQIESLPSQVKATVLQQLGWMHHNMDLIGDNTTKERYAIQYLQKSLEEDPNSGQSWYFLGRCYSCIGKVQDAFVSYRQSIDKSEASADTWCSIGVLYQQQNQPMDALQAYICAVQLDHGHAAAWMDLGILYESCNQPQDAIKCYLNAARSKSCNNTSALTSRIKFLQAQLCNLPQSSLQNKTKLLPSIEEAWSLPIPAELTSRQGAMNTAQQSVSDTWNSVQTASHHSVQQKVYTQCFTAQKLQSFGKDQQPPFQTGSTRYLQAASTNDQNQNGNHTLPQNSKGDAQNHFLRIPTSEEQKIINFTKESKDSRSKSLTSKTSRKDRDTSNICVNAKKHSNHIYQISSVPISSLNNKESVSPDLIIVDNPQLSVLVGETIDNVDHDIGTCNKVNNVHLAIHKKPDNLSASSPSSAISTETLSLKLTEQTHIVTSFISPHSGLHTINGEGHENLESSASVNVGLRPRSQIIPSMSVSIYSSSTEVLKACRSLGKNGLSNGHILLDICPPPRPPTSPYPPLPKEKLNPPTPSIYLENKRDAFFPPLHQFCINPKNPVTVIRGLAGALKLDLGLFSTKTLVEANNEHIVEVRTQLLQPADENWDPSGTKKIWRYENKSSHTTIAKYAQYQACSFQESLREENERRTQVKDYSDNESTCSDNSGRRQKAPFKTIKCGINIDLSDNKKWKLQLHELTKLPAFVRVVSAGNLLSHVGYTILGMNSVQLCMKVPGSRIPGHQENNNFCSVNINIGPGDCEWFVVPEDYWGVLNDFCEKNNLNFLMSSWWPNLEDLYEANVPVYRFIQRPGDLVWINAGTVHWVQAIGWCNNITWNVGPLTAFQYKLAVERYEWNKLQSVKSVVPMVHLSWNMARNIKVSDPKLFEMIKYCLLKILKHCQTLREALVAAGKEVLWHGRINDEPAPYCSICEVEVFNLLFVTNESNSQKTYIVHCQNCARKTSGNLENFVVLEQYKMEDLIQVYDQFTLAPSLSSAS</sequence>
<comment type="function">
    <text evidence="2">Male-specific histone demethylase that catalyzes trimethylated 'Lys-27' (H3K27me3) demethylation in histone H3. Has relatively low KDM activity.</text>
</comment>
<comment type="catalytic activity">
    <reaction evidence="2">
        <text>N(6),N(6),N(6)-trimethyl-L-lysyl(27)-[histone H3] + 2 2-oxoglutarate + 2 O2 = N(6)-methyl-L-lysyl(27)-[histone H3] + 2 formaldehyde + 2 succinate + 2 CO2</text>
        <dbReference type="Rhea" id="RHEA:60224"/>
        <dbReference type="Rhea" id="RHEA-COMP:15535"/>
        <dbReference type="Rhea" id="RHEA-COMP:15544"/>
        <dbReference type="ChEBI" id="CHEBI:15379"/>
        <dbReference type="ChEBI" id="CHEBI:16526"/>
        <dbReference type="ChEBI" id="CHEBI:16810"/>
        <dbReference type="ChEBI" id="CHEBI:16842"/>
        <dbReference type="ChEBI" id="CHEBI:30031"/>
        <dbReference type="ChEBI" id="CHEBI:61929"/>
        <dbReference type="ChEBI" id="CHEBI:61961"/>
        <dbReference type="EC" id="1.14.11.68"/>
    </reaction>
</comment>
<comment type="cofactor">
    <cofactor evidence="1">
        <name>L-ascorbate</name>
        <dbReference type="ChEBI" id="CHEBI:38290"/>
    </cofactor>
</comment>
<comment type="cofactor">
    <cofactor evidence="1">
        <name>Fe(2+)</name>
        <dbReference type="ChEBI" id="CHEBI:29033"/>
    </cofactor>
</comment>
<comment type="subunit">
    <text>Binds TLE1 and TLE2.</text>
</comment>
<comment type="subcellular location">
    <subcellularLocation>
        <location evidence="5">Nucleus</location>
    </subcellularLocation>
</comment>
<comment type="similarity">
    <text evidence="5">Belongs to the UTX family.</text>
</comment>